<feature type="chain" id="PRO_0000374673" description="Ribosomal protein uS12 methylthiotransferase RimO">
    <location>
        <begin position="1"/>
        <end position="442"/>
    </location>
</feature>
<feature type="domain" description="MTTase N-terminal" evidence="1">
    <location>
        <begin position="5"/>
        <end position="117"/>
    </location>
</feature>
<feature type="domain" description="Radical SAM core" evidence="2">
    <location>
        <begin position="134"/>
        <end position="371"/>
    </location>
</feature>
<feature type="domain" description="TRAM" evidence="1">
    <location>
        <begin position="374"/>
        <end position="441"/>
    </location>
</feature>
<feature type="binding site" evidence="1">
    <location>
        <position position="14"/>
    </location>
    <ligand>
        <name>[4Fe-4S] cluster</name>
        <dbReference type="ChEBI" id="CHEBI:49883"/>
        <label>1</label>
    </ligand>
</feature>
<feature type="binding site" evidence="1">
    <location>
        <position position="50"/>
    </location>
    <ligand>
        <name>[4Fe-4S] cluster</name>
        <dbReference type="ChEBI" id="CHEBI:49883"/>
        <label>1</label>
    </ligand>
</feature>
<feature type="binding site" evidence="1">
    <location>
        <position position="79"/>
    </location>
    <ligand>
        <name>[4Fe-4S] cluster</name>
        <dbReference type="ChEBI" id="CHEBI:49883"/>
        <label>1</label>
    </ligand>
</feature>
<feature type="binding site" evidence="1">
    <location>
        <position position="148"/>
    </location>
    <ligand>
        <name>[4Fe-4S] cluster</name>
        <dbReference type="ChEBI" id="CHEBI:49883"/>
        <label>2</label>
        <note>4Fe-4S-S-AdoMet</note>
    </ligand>
</feature>
<feature type="binding site" evidence="1">
    <location>
        <position position="152"/>
    </location>
    <ligand>
        <name>[4Fe-4S] cluster</name>
        <dbReference type="ChEBI" id="CHEBI:49883"/>
        <label>2</label>
        <note>4Fe-4S-S-AdoMet</note>
    </ligand>
</feature>
<feature type="binding site" evidence="1">
    <location>
        <position position="155"/>
    </location>
    <ligand>
        <name>[4Fe-4S] cluster</name>
        <dbReference type="ChEBI" id="CHEBI:49883"/>
        <label>2</label>
        <note>4Fe-4S-S-AdoMet</note>
    </ligand>
</feature>
<keyword id="KW-0004">4Fe-4S</keyword>
<keyword id="KW-0963">Cytoplasm</keyword>
<keyword id="KW-0408">Iron</keyword>
<keyword id="KW-0411">Iron-sulfur</keyword>
<keyword id="KW-0479">Metal-binding</keyword>
<keyword id="KW-0949">S-adenosyl-L-methionine</keyword>
<keyword id="KW-0808">Transferase</keyword>
<sequence>MKKIPSIGVVSLGCPKATVDSERILTQLRAEGYLLVGDYANADVVVVNTCGFIDAAVEESLEAIGEALDENGKVVVTGCLGAREGGDFVRGAHPKVLAVTGPNQAGAVLDAIHAALPPAHDPYTDLVPPQGLRLTPPHYAYLKISEGCNQSCSFCIIPSMRGKLVSRAPDDILREAEALVAGGAKELLVISQDTGAYGVDRKYRTAFHNGRPLKTRITDLCAALGELGVWVRLHYVYPYPHIDELLPLMAEGKILPYLDVPLQHGSPRILKAMRRPAAAEKTLDRILGWRQAVPDLIIRSTFIVGFPGETDADFAELLDFLRAAELDRVGCFAYSAVEGAPANAIAGAVPEPVKEERRAAFMAVQEAISRQRLQRRVGQRQRVLVDAMARGGRVIARSASDAPEIDGVVHLGKAAGLQVGDWVEVAITRADAHDLYGMVVSA</sequence>
<evidence type="ECO:0000255" key="1">
    <source>
        <dbReference type="HAMAP-Rule" id="MF_01865"/>
    </source>
</evidence>
<evidence type="ECO:0000255" key="2">
    <source>
        <dbReference type="PROSITE-ProRule" id="PRU01266"/>
    </source>
</evidence>
<comment type="function">
    <text evidence="1">Catalyzes the methylthiolation of an aspartic acid residue of ribosomal protein uS12.</text>
</comment>
<comment type="catalytic activity">
    <reaction evidence="1">
        <text>L-aspartate(89)-[ribosomal protein uS12]-hydrogen + (sulfur carrier)-SH + AH2 + 2 S-adenosyl-L-methionine = 3-methylsulfanyl-L-aspartate(89)-[ribosomal protein uS12]-hydrogen + (sulfur carrier)-H + 5'-deoxyadenosine + L-methionine + A + S-adenosyl-L-homocysteine + 2 H(+)</text>
        <dbReference type="Rhea" id="RHEA:37087"/>
        <dbReference type="Rhea" id="RHEA-COMP:10460"/>
        <dbReference type="Rhea" id="RHEA-COMP:10461"/>
        <dbReference type="Rhea" id="RHEA-COMP:14737"/>
        <dbReference type="Rhea" id="RHEA-COMP:14739"/>
        <dbReference type="ChEBI" id="CHEBI:13193"/>
        <dbReference type="ChEBI" id="CHEBI:15378"/>
        <dbReference type="ChEBI" id="CHEBI:17319"/>
        <dbReference type="ChEBI" id="CHEBI:17499"/>
        <dbReference type="ChEBI" id="CHEBI:29917"/>
        <dbReference type="ChEBI" id="CHEBI:29961"/>
        <dbReference type="ChEBI" id="CHEBI:57844"/>
        <dbReference type="ChEBI" id="CHEBI:57856"/>
        <dbReference type="ChEBI" id="CHEBI:59789"/>
        <dbReference type="ChEBI" id="CHEBI:64428"/>
        <dbReference type="ChEBI" id="CHEBI:73599"/>
        <dbReference type="EC" id="2.8.4.4"/>
    </reaction>
</comment>
<comment type="cofactor">
    <cofactor evidence="1">
        <name>[4Fe-4S] cluster</name>
        <dbReference type="ChEBI" id="CHEBI:49883"/>
    </cofactor>
    <text evidence="1">Binds 2 [4Fe-4S] clusters. One cluster is coordinated with 3 cysteines and an exchangeable S-adenosyl-L-methionine.</text>
</comment>
<comment type="subcellular location">
    <subcellularLocation>
        <location evidence="1">Cytoplasm</location>
    </subcellularLocation>
</comment>
<comment type="similarity">
    <text evidence="1">Belongs to the methylthiotransferase family. RimO subfamily.</text>
</comment>
<organism>
    <name type="scientific">Acidithiobacillus ferrooxidans (strain ATCC 53993 / BNL-5-31)</name>
    <name type="common">Leptospirillum ferrooxidans (ATCC 53993)</name>
    <dbReference type="NCBI Taxonomy" id="380394"/>
    <lineage>
        <taxon>Bacteria</taxon>
        <taxon>Pseudomonadati</taxon>
        <taxon>Pseudomonadota</taxon>
        <taxon>Acidithiobacillia</taxon>
        <taxon>Acidithiobacillales</taxon>
        <taxon>Acidithiobacillaceae</taxon>
        <taxon>Acidithiobacillus</taxon>
    </lineage>
</organism>
<dbReference type="EC" id="2.8.4.4" evidence="1"/>
<dbReference type="EMBL" id="CP001132">
    <property type="protein sequence ID" value="ACH82388.1"/>
    <property type="molecule type" value="Genomic_DNA"/>
</dbReference>
<dbReference type="RefSeq" id="WP_012535804.1">
    <property type="nucleotide sequence ID" value="NC_011206.1"/>
</dbReference>
<dbReference type="SMR" id="B5EK28"/>
<dbReference type="KEGG" id="afe:Lferr_0127"/>
<dbReference type="eggNOG" id="COG0621">
    <property type="taxonomic scope" value="Bacteria"/>
</dbReference>
<dbReference type="HOGENOM" id="CLU_018697_0_0_6"/>
<dbReference type="GO" id="GO:0005829">
    <property type="term" value="C:cytosol"/>
    <property type="evidence" value="ECO:0007669"/>
    <property type="project" value="TreeGrafter"/>
</dbReference>
<dbReference type="GO" id="GO:0051539">
    <property type="term" value="F:4 iron, 4 sulfur cluster binding"/>
    <property type="evidence" value="ECO:0007669"/>
    <property type="project" value="UniProtKB-UniRule"/>
</dbReference>
<dbReference type="GO" id="GO:0035599">
    <property type="term" value="F:aspartic acid methylthiotransferase activity"/>
    <property type="evidence" value="ECO:0007669"/>
    <property type="project" value="TreeGrafter"/>
</dbReference>
<dbReference type="GO" id="GO:0046872">
    <property type="term" value="F:metal ion binding"/>
    <property type="evidence" value="ECO:0007669"/>
    <property type="project" value="UniProtKB-KW"/>
</dbReference>
<dbReference type="GO" id="GO:0103039">
    <property type="term" value="F:protein methylthiotransferase activity"/>
    <property type="evidence" value="ECO:0007669"/>
    <property type="project" value="UniProtKB-EC"/>
</dbReference>
<dbReference type="GO" id="GO:0006400">
    <property type="term" value="P:tRNA modification"/>
    <property type="evidence" value="ECO:0007669"/>
    <property type="project" value="InterPro"/>
</dbReference>
<dbReference type="CDD" id="cd01335">
    <property type="entry name" value="Radical_SAM"/>
    <property type="match status" value="1"/>
</dbReference>
<dbReference type="FunFam" id="3.40.50.12160:FF:000002">
    <property type="entry name" value="Ribosomal protein S12 methylthiotransferase RimO"/>
    <property type="match status" value="1"/>
</dbReference>
<dbReference type="FunFam" id="3.80.30.20:FF:000001">
    <property type="entry name" value="tRNA-2-methylthio-N(6)-dimethylallyladenosine synthase 2"/>
    <property type="match status" value="1"/>
</dbReference>
<dbReference type="Gene3D" id="3.40.50.12160">
    <property type="entry name" value="Methylthiotransferase, N-terminal domain"/>
    <property type="match status" value="1"/>
</dbReference>
<dbReference type="Gene3D" id="2.40.50.140">
    <property type="entry name" value="Nucleic acid-binding proteins"/>
    <property type="match status" value="1"/>
</dbReference>
<dbReference type="Gene3D" id="3.80.30.20">
    <property type="entry name" value="tm_1862 like domain"/>
    <property type="match status" value="1"/>
</dbReference>
<dbReference type="HAMAP" id="MF_01865">
    <property type="entry name" value="MTTase_RimO"/>
    <property type="match status" value="1"/>
</dbReference>
<dbReference type="InterPro" id="IPR006638">
    <property type="entry name" value="Elp3/MiaA/NifB-like_rSAM"/>
</dbReference>
<dbReference type="InterPro" id="IPR005839">
    <property type="entry name" value="Methylthiotransferase"/>
</dbReference>
<dbReference type="InterPro" id="IPR020612">
    <property type="entry name" value="Methylthiotransferase_CS"/>
</dbReference>
<dbReference type="InterPro" id="IPR013848">
    <property type="entry name" value="Methylthiotransferase_N"/>
</dbReference>
<dbReference type="InterPro" id="IPR038135">
    <property type="entry name" value="Methylthiotransferase_N_sf"/>
</dbReference>
<dbReference type="InterPro" id="IPR012340">
    <property type="entry name" value="NA-bd_OB-fold"/>
</dbReference>
<dbReference type="InterPro" id="IPR005840">
    <property type="entry name" value="Ribosomal_uS12_MeSTrfase_RimO"/>
</dbReference>
<dbReference type="InterPro" id="IPR007197">
    <property type="entry name" value="rSAM"/>
</dbReference>
<dbReference type="InterPro" id="IPR023404">
    <property type="entry name" value="rSAM_horseshoe"/>
</dbReference>
<dbReference type="InterPro" id="IPR002792">
    <property type="entry name" value="TRAM_dom"/>
</dbReference>
<dbReference type="NCBIfam" id="TIGR01125">
    <property type="entry name" value="30S ribosomal protein S12 methylthiotransferase RimO"/>
    <property type="match status" value="1"/>
</dbReference>
<dbReference type="NCBIfam" id="TIGR00089">
    <property type="entry name" value="MiaB/RimO family radical SAM methylthiotransferase"/>
    <property type="match status" value="1"/>
</dbReference>
<dbReference type="PANTHER" id="PTHR43837">
    <property type="entry name" value="RIBOSOMAL PROTEIN S12 METHYLTHIOTRANSFERASE RIMO"/>
    <property type="match status" value="1"/>
</dbReference>
<dbReference type="PANTHER" id="PTHR43837:SF1">
    <property type="entry name" value="RIBOSOMAL PROTEIN US12 METHYLTHIOTRANSFERASE RIMO"/>
    <property type="match status" value="1"/>
</dbReference>
<dbReference type="Pfam" id="PF04055">
    <property type="entry name" value="Radical_SAM"/>
    <property type="match status" value="1"/>
</dbReference>
<dbReference type="Pfam" id="PF18693">
    <property type="entry name" value="TRAM_2"/>
    <property type="match status" value="1"/>
</dbReference>
<dbReference type="Pfam" id="PF00919">
    <property type="entry name" value="UPF0004"/>
    <property type="match status" value="1"/>
</dbReference>
<dbReference type="SFLD" id="SFLDG01082">
    <property type="entry name" value="B12-binding_domain_containing"/>
    <property type="match status" value="1"/>
</dbReference>
<dbReference type="SFLD" id="SFLDS00029">
    <property type="entry name" value="Radical_SAM"/>
    <property type="match status" value="1"/>
</dbReference>
<dbReference type="SFLD" id="SFLDF00274">
    <property type="entry name" value="ribosomal_protein_S12_methylth"/>
    <property type="match status" value="1"/>
</dbReference>
<dbReference type="SMART" id="SM00729">
    <property type="entry name" value="Elp3"/>
    <property type="match status" value="1"/>
</dbReference>
<dbReference type="SUPFAM" id="SSF102114">
    <property type="entry name" value="Radical SAM enzymes"/>
    <property type="match status" value="1"/>
</dbReference>
<dbReference type="PROSITE" id="PS51449">
    <property type="entry name" value="MTTASE_N"/>
    <property type="match status" value="1"/>
</dbReference>
<dbReference type="PROSITE" id="PS01278">
    <property type="entry name" value="MTTASE_RADICAL"/>
    <property type="match status" value="1"/>
</dbReference>
<dbReference type="PROSITE" id="PS51918">
    <property type="entry name" value="RADICAL_SAM"/>
    <property type="match status" value="1"/>
</dbReference>
<dbReference type="PROSITE" id="PS50926">
    <property type="entry name" value="TRAM"/>
    <property type="match status" value="1"/>
</dbReference>
<gene>
    <name evidence="1" type="primary">rimO</name>
    <name type="ordered locus">Lferr_0127</name>
</gene>
<protein>
    <recommendedName>
        <fullName evidence="1">Ribosomal protein uS12 methylthiotransferase RimO</fullName>
        <shortName evidence="1">uS12 MTTase</shortName>
        <shortName evidence="1">uS12 methylthiotransferase</shortName>
        <ecNumber evidence="1">2.8.4.4</ecNumber>
    </recommendedName>
    <alternativeName>
        <fullName evidence="1">Ribosomal protein uS12 (aspartate-C(3))-methylthiotransferase</fullName>
    </alternativeName>
    <alternativeName>
        <fullName evidence="1">Ribosome maturation factor RimO</fullName>
    </alternativeName>
</protein>
<reference key="1">
    <citation type="submission" date="2008-08" db="EMBL/GenBank/DDBJ databases">
        <title>Complete sequence of Acidithiobacillus ferrooxidans ATCC 53993.</title>
        <authorList>
            <person name="Lucas S."/>
            <person name="Copeland A."/>
            <person name="Lapidus A."/>
            <person name="Glavina del Rio T."/>
            <person name="Dalin E."/>
            <person name="Tice H."/>
            <person name="Bruce D."/>
            <person name="Goodwin L."/>
            <person name="Pitluck S."/>
            <person name="Sims D."/>
            <person name="Brettin T."/>
            <person name="Detter J.C."/>
            <person name="Han C."/>
            <person name="Kuske C.R."/>
            <person name="Larimer F."/>
            <person name="Land M."/>
            <person name="Hauser L."/>
            <person name="Kyrpides N."/>
            <person name="Lykidis A."/>
            <person name="Borole A.P."/>
        </authorList>
    </citation>
    <scope>NUCLEOTIDE SEQUENCE [LARGE SCALE GENOMIC DNA]</scope>
    <source>
        <strain>ATCC 53993 / BNL-5-31</strain>
    </source>
</reference>
<accession>B5EK28</accession>
<proteinExistence type="inferred from homology"/>
<name>RIMO_ACIF5</name>